<organism>
    <name type="scientific">Heliobacterium modesticaldum (strain ATCC 51547 / Ice1)</name>
    <dbReference type="NCBI Taxonomy" id="498761"/>
    <lineage>
        <taxon>Bacteria</taxon>
        <taxon>Bacillati</taxon>
        <taxon>Bacillota</taxon>
        <taxon>Clostridia</taxon>
        <taxon>Eubacteriales</taxon>
        <taxon>Heliobacteriaceae</taxon>
        <taxon>Heliomicrobium</taxon>
    </lineage>
</organism>
<accession>B0TI53</accession>
<sequence>MLTGAVARRYAQALLEIGIQTKTLDALEGELGRFVEMIGHPELQRFLFHPSIVVAEKKDLVGRLLATGAFSETARAFILLVIDRRRESYFADIFREFVRLANKVRNIEEARVTSAVELAPEQVERLRSQLAAATGKAIVLRMAVDPDLIGGLVVAFGDRIIDGSVAGKIRDLRESLLRSPLPSLS</sequence>
<name>ATPD_HELMI</name>
<feature type="chain" id="PRO_0000370998" description="ATP synthase subunit delta">
    <location>
        <begin position="1"/>
        <end position="185"/>
    </location>
</feature>
<dbReference type="EMBL" id="CP000930">
    <property type="protein sequence ID" value="ABZ83473.1"/>
    <property type="molecule type" value="Genomic_DNA"/>
</dbReference>
<dbReference type="RefSeq" id="WP_012282002.1">
    <property type="nucleotide sequence ID" value="NC_010337.2"/>
</dbReference>
<dbReference type="SMR" id="B0TI53"/>
<dbReference type="STRING" id="498761.HM1_1101"/>
<dbReference type="KEGG" id="hmo:HM1_1101"/>
<dbReference type="eggNOG" id="COG0712">
    <property type="taxonomic scope" value="Bacteria"/>
</dbReference>
<dbReference type="HOGENOM" id="CLU_085114_1_1_9"/>
<dbReference type="OrthoDB" id="9802471at2"/>
<dbReference type="Proteomes" id="UP000008550">
    <property type="component" value="Chromosome"/>
</dbReference>
<dbReference type="GO" id="GO:0005886">
    <property type="term" value="C:plasma membrane"/>
    <property type="evidence" value="ECO:0007669"/>
    <property type="project" value="UniProtKB-SubCell"/>
</dbReference>
<dbReference type="GO" id="GO:0045259">
    <property type="term" value="C:proton-transporting ATP synthase complex"/>
    <property type="evidence" value="ECO:0007669"/>
    <property type="project" value="UniProtKB-KW"/>
</dbReference>
<dbReference type="GO" id="GO:0046933">
    <property type="term" value="F:proton-transporting ATP synthase activity, rotational mechanism"/>
    <property type="evidence" value="ECO:0007669"/>
    <property type="project" value="UniProtKB-UniRule"/>
</dbReference>
<dbReference type="Gene3D" id="1.10.520.20">
    <property type="entry name" value="N-terminal domain of the delta subunit of the F1F0-ATP synthase"/>
    <property type="match status" value="1"/>
</dbReference>
<dbReference type="HAMAP" id="MF_01416">
    <property type="entry name" value="ATP_synth_delta_bact"/>
    <property type="match status" value="1"/>
</dbReference>
<dbReference type="InterPro" id="IPR026015">
    <property type="entry name" value="ATP_synth_OSCP/delta_N_sf"/>
</dbReference>
<dbReference type="InterPro" id="IPR000711">
    <property type="entry name" value="ATPase_OSCP/dsu"/>
</dbReference>
<dbReference type="NCBIfam" id="TIGR01145">
    <property type="entry name" value="ATP_synt_delta"/>
    <property type="match status" value="1"/>
</dbReference>
<dbReference type="PANTHER" id="PTHR11910">
    <property type="entry name" value="ATP SYNTHASE DELTA CHAIN"/>
    <property type="match status" value="1"/>
</dbReference>
<dbReference type="Pfam" id="PF00213">
    <property type="entry name" value="OSCP"/>
    <property type="match status" value="1"/>
</dbReference>
<dbReference type="PRINTS" id="PR00125">
    <property type="entry name" value="ATPASEDELTA"/>
</dbReference>
<dbReference type="SUPFAM" id="SSF47928">
    <property type="entry name" value="N-terminal domain of the delta subunit of the F1F0-ATP synthase"/>
    <property type="match status" value="1"/>
</dbReference>
<keyword id="KW-0066">ATP synthesis</keyword>
<keyword id="KW-1003">Cell membrane</keyword>
<keyword id="KW-0139">CF(1)</keyword>
<keyword id="KW-0375">Hydrogen ion transport</keyword>
<keyword id="KW-0406">Ion transport</keyword>
<keyword id="KW-0472">Membrane</keyword>
<keyword id="KW-1185">Reference proteome</keyword>
<keyword id="KW-0813">Transport</keyword>
<reference key="1">
    <citation type="journal article" date="2008" name="J. Bacteriol.">
        <title>The genome of Heliobacterium modesticaldum, a phototrophic representative of the Firmicutes containing the simplest photosynthetic apparatus.</title>
        <authorList>
            <person name="Sattley W.M."/>
            <person name="Madigan M.T."/>
            <person name="Swingley W.D."/>
            <person name="Cheung P.C."/>
            <person name="Clocksin K.M."/>
            <person name="Conrad A.L."/>
            <person name="Dejesa L.C."/>
            <person name="Honchak B.M."/>
            <person name="Jung D.O."/>
            <person name="Karbach L.E."/>
            <person name="Kurdoglu A."/>
            <person name="Lahiri S."/>
            <person name="Mastrian S.D."/>
            <person name="Page L.E."/>
            <person name="Taylor H.L."/>
            <person name="Wang Z.T."/>
            <person name="Raymond J."/>
            <person name="Chen M."/>
            <person name="Blankenship R.E."/>
            <person name="Touchman J.W."/>
        </authorList>
    </citation>
    <scope>NUCLEOTIDE SEQUENCE [LARGE SCALE GENOMIC DNA]</scope>
    <source>
        <strain>ATCC 51547 / Ice1</strain>
    </source>
</reference>
<gene>
    <name evidence="2" type="primary">atpH</name>
    <name type="ordered locus">Helmi_08480</name>
    <name type="ORF">HM1_1101</name>
</gene>
<protein>
    <recommendedName>
        <fullName evidence="2">ATP synthase subunit delta</fullName>
    </recommendedName>
    <alternativeName>
        <fullName evidence="2">ATP synthase F(1) sector subunit delta</fullName>
    </alternativeName>
    <alternativeName>
        <fullName evidence="2">F-type ATPase subunit delta</fullName>
        <shortName evidence="2">F-ATPase subunit delta</shortName>
    </alternativeName>
</protein>
<comment type="function">
    <text evidence="2">F(1)F(0) ATP synthase produces ATP from ADP in the presence of a proton or sodium gradient. F-type ATPases consist of two structural domains, F(1) containing the extramembraneous catalytic core and F(0) containing the membrane proton channel, linked together by a central stalk and a peripheral stalk. During catalysis, ATP synthesis in the catalytic domain of F(1) is coupled via a rotary mechanism of the central stalk subunits to proton translocation.</text>
</comment>
<comment type="function">
    <text evidence="2">This protein is part of the stalk that links CF(0) to CF(1). It either transmits conformational changes from CF(0) to CF(1) or is implicated in proton conduction.</text>
</comment>
<comment type="subunit">
    <text evidence="1">F-type ATPases have 2 components, F(1) - the catalytic core - and F(0) - the membrane proton channel. F(1) has five subunits: alpha(3), beta(3), gamma(1), delta(1), epsilon(1). CF(0) has four main subunits: a(1), b(2) and c(10-14). The alpha and beta chains form an alternating ring which encloses part of the gamma chain. F(1) is attached to F(0) by a central stalk formed by the gamma and epsilon chains, while a peripheral stalk is formed by the delta and b chains (By similarity).</text>
</comment>
<comment type="subcellular location">
    <subcellularLocation>
        <location evidence="2">Cell membrane</location>
        <topology evidence="2">Peripheral membrane protein</topology>
    </subcellularLocation>
</comment>
<comment type="similarity">
    <text evidence="2">Belongs to the ATPase delta chain family.</text>
</comment>
<proteinExistence type="inferred from homology"/>
<evidence type="ECO:0000250" key="1"/>
<evidence type="ECO:0000255" key="2">
    <source>
        <dbReference type="HAMAP-Rule" id="MF_01416"/>
    </source>
</evidence>